<comment type="function">
    <text evidence="5">Central component of the receptor complex responsible for the recognition and translocation of cytosolically synthesized mitochondrial preproteins. Together with TOM22 functions as the transit peptide receptor at the surface of the mitochondrion outer membrane and facilitates the movement of preproteins into the translocation pore.</text>
</comment>
<comment type="subunit">
    <text evidence="1 5 6 8">Forms part of the preprotein translocase complex of the outer mitochondrial membrane (TOM complex) which consists of at least 6 different proteins (TOM5, TOM6, TOM7, TOM20, TOM22/TOM9 and TOM40) (PubMed:17981999, Ref.6). Interacts with a variety of mitochondrial precursor proteins. Interacts with AKR2A (PubMed:20215589). Component of a mitochondrial large protein complex that contains, at least, MIC60, DGS1, TOM40, TOM20 proteins, and petC/RISP (By similarity).</text>
</comment>
<comment type="interaction">
    <interactant intactId="EBI-2351908">
        <id>P82805</id>
    </interactant>
    <interactant intactId="EBI-2124038">
        <id>Q9LHE5</id>
        <label>TOM40-1</label>
    </interactant>
    <organismsDiffer>false</organismsDiffer>
    <experiments>2</experiments>
</comment>
<comment type="interaction">
    <interactant intactId="EBI-2351908">
        <id>P82805</id>
    </interactant>
    <interactant intactId="EBI-2362258">
        <id>O80413</id>
        <label>103627788</label>
    </interactant>
    <organismsDiffer>true</organismsDiffer>
    <experiments>2</experiments>
</comment>
<comment type="interaction">
    <interactant intactId="EBI-2351908">
        <id>P82805</id>
    </interactant>
    <interactant intactId="EBI-2123914">
        <id>Q07185</id>
        <label>AOX1</label>
    </interactant>
    <organismsDiffer>true</organismsDiffer>
    <experiments>2</experiments>
</comment>
<comment type="interaction">
    <interactant intactId="EBI-2351908">
        <id>P82805</id>
    </interactant>
    <interactant intactId="EBI-2124012">
        <id>Q7DM06</id>
    </interactant>
    <organismsDiffer>true</organismsDiffer>
    <experiments>2</experiments>
</comment>
<comment type="subcellular location">
    <subcellularLocation>
        <location evidence="10">Mitochondrion outer membrane</location>
        <topology evidence="10">Single-pass membrane protein</topology>
    </subcellularLocation>
</comment>
<comment type="tissue specificity">
    <text evidence="4">Expressed in roots, flowers, young cotyledons and leaves.</text>
</comment>
<comment type="induction">
    <text evidence="4">Up-regulated after antimycin A or rotenone treatments.</text>
</comment>
<comment type="PTM">
    <text>The N-terminus is blocked.</text>
</comment>
<comment type="disruption phenotype">
    <text evidence="5">No visible phenotype. Triple mutants tom20-2-tom20-3-tom20-4 are vible but display a slightly delayed flowering time.</text>
</comment>
<comment type="miscellaneous">
    <text>There are four genes (TOM20-1, TOM20-2, TOM20-3 and TOM20-4) which encode mitochondrial import receptor subunits TOM20.</text>
</comment>
<comment type="miscellaneous">
    <text>In mammals and fungi, the transmembrane domain is located at the N-terminus while it is located at the C-terminus in plants. The overall orientation of the protein in the membrane is therefore inverted.</text>
</comment>
<comment type="similarity">
    <text evidence="10">Belongs to the Tom20 family.</text>
</comment>
<reference key="1">
    <citation type="submission" date="1999-02" db="EMBL/GenBank/DDBJ databases">
        <title>Structural analysis of Arabidopsis thaliana chromosome 5. XI.</title>
        <authorList>
            <person name="Kaneko T."/>
            <person name="Katoh T."/>
            <person name="Asamizu E."/>
            <person name="Sato S."/>
            <person name="Nakamura Y."/>
            <person name="Kotani H."/>
            <person name="Tabata S."/>
        </authorList>
    </citation>
    <scope>NUCLEOTIDE SEQUENCE [LARGE SCALE GENOMIC DNA]</scope>
    <source>
        <strain>cv. Columbia</strain>
    </source>
</reference>
<reference key="2">
    <citation type="journal article" date="2017" name="Plant J.">
        <title>Araport11: a complete reannotation of the Arabidopsis thaliana reference genome.</title>
        <authorList>
            <person name="Cheng C.Y."/>
            <person name="Krishnakumar V."/>
            <person name="Chan A.P."/>
            <person name="Thibaud-Nissen F."/>
            <person name="Schobel S."/>
            <person name="Town C.D."/>
        </authorList>
    </citation>
    <scope>GENOME REANNOTATION</scope>
    <source>
        <strain>cv. Columbia</strain>
    </source>
</reference>
<reference key="3">
    <citation type="journal article" date="2003" name="Science">
        <title>Empirical analysis of transcriptional activity in the Arabidopsis genome.</title>
        <authorList>
            <person name="Yamada K."/>
            <person name="Lim J."/>
            <person name="Dale J.M."/>
            <person name="Chen H."/>
            <person name="Shinn P."/>
            <person name="Palm C.J."/>
            <person name="Southwick A.M."/>
            <person name="Wu H.C."/>
            <person name="Kim C.J."/>
            <person name="Nguyen M."/>
            <person name="Pham P.K."/>
            <person name="Cheuk R.F."/>
            <person name="Karlin-Newmann G."/>
            <person name="Liu S.X."/>
            <person name="Lam B."/>
            <person name="Sakano H."/>
            <person name="Wu T."/>
            <person name="Yu G."/>
            <person name="Miranda M."/>
            <person name="Quach H.L."/>
            <person name="Tripp M."/>
            <person name="Chang C.H."/>
            <person name="Lee J.M."/>
            <person name="Toriumi M.J."/>
            <person name="Chan M.M."/>
            <person name="Tang C.C."/>
            <person name="Onodera C.S."/>
            <person name="Deng J.M."/>
            <person name="Akiyama K."/>
            <person name="Ansari Y."/>
            <person name="Arakawa T."/>
            <person name="Banh J."/>
            <person name="Banno F."/>
            <person name="Bowser L."/>
            <person name="Brooks S.Y."/>
            <person name="Carninci P."/>
            <person name="Chao Q."/>
            <person name="Choy N."/>
            <person name="Enju A."/>
            <person name="Goldsmith A.D."/>
            <person name="Gurjal M."/>
            <person name="Hansen N.F."/>
            <person name="Hayashizaki Y."/>
            <person name="Johnson-Hopson C."/>
            <person name="Hsuan V.W."/>
            <person name="Iida K."/>
            <person name="Karnes M."/>
            <person name="Khan S."/>
            <person name="Koesema E."/>
            <person name="Ishida J."/>
            <person name="Jiang P.X."/>
            <person name="Jones T."/>
            <person name="Kawai J."/>
            <person name="Kamiya A."/>
            <person name="Meyers C."/>
            <person name="Nakajima M."/>
            <person name="Narusaka M."/>
            <person name="Seki M."/>
            <person name="Sakurai T."/>
            <person name="Satou M."/>
            <person name="Tamse R."/>
            <person name="Vaysberg M."/>
            <person name="Wallender E.K."/>
            <person name="Wong C."/>
            <person name="Yamamura Y."/>
            <person name="Yuan S."/>
            <person name="Shinozaki K."/>
            <person name="Davis R.W."/>
            <person name="Theologis A."/>
            <person name="Ecker J.R."/>
        </authorList>
    </citation>
    <scope>NUCLEOTIDE SEQUENCE [LARGE SCALE MRNA]</scope>
    <source>
        <strain>cv. Columbia</strain>
    </source>
</reference>
<reference key="4">
    <citation type="journal article" date="2002" name="Science">
        <title>Functional annotation of a full-length Arabidopsis cDNA collection.</title>
        <authorList>
            <person name="Seki M."/>
            <person name="Narusaka M."/>
            <person name="Kamiya A."/>
            <person name="Ishida J."/>
            <person name="Satou M."/>
            <person name="Sakurai T."/>
            <person name="Nakajima M."/>
            <person name="Enju A."/>
            <person name="Akiyama K."/>
            <person name="Oono Y."/>
            <person name="Muramatsu M."/>
            <person name="Hayashizaki Y."/>
            <person name="Kawai J."/>
            <person name="Carninci P."/>
            <person name="Itoh M."/>
            <person name="Ishii Y."/>
            <person name="Arakawa T."/>
            <person name="Shibata K."/>
            <person name="Shinagawa A."/>
            <person name="Shinozaki K."/>
        </authorList>
    </citation>
    <scope>NUCLEOTIDE SEQUENCE [LARGE SCALE MRNA]</scope>
    <source>
        <strain>cv. Columbia</strain>
    </source>
</reference>
<reference key="5">
    <citation type="journal article" date="2001" name="Plant Physiol.">
        <title>Purification and characterization of the preprotein translocase of the outer mitochondrial membrane from Arabidopsis. Identification of multiple forms of TOM20.</title>
        <authorList>
            <person name="Werhahn W."/>
            <person name="Niemeyer A."/>
            <person name="Jaensch L."/>
            <person name="Kruft V."/>
            <person name="Schmitz U.K."/>
            <person name="Braun H.-P."/>
        </authorList>
    </citation>
    <scope>PROTEIN SEQUENCE OF 102-117</scope>
    <source>
        <strain>cv. Columbia</strain>
    </source>
</reference>
<reference key="6">
    <citation type="journal article" date="2003" name="Plant Physiol. Biochem.">
        <title>Identification of novel subunits of the TOM complex from Arabidopsis thaliana.</title>
        <authorList>
            <person name="Werhahn W."/>
            <person name="Jaensch L."/>
            <person name="Braun H.-P."/>
        </authorList>
    </citation>
    <scope>SUBUNIT</scope>
</reference>
<reference key="7">
    <citation type="journal article" date="2004" name="Plant Physiol.">
        <title>A transcriptomic and proteomic characterization of the Arabidopsis mitochondrial protein import apparatus and its response to mitochondrial dysfunction.</title>
        <authorList>
            <person name="Lister R."/>
            <person name="Chew O."/>
            <person name="Lee M.N."/>
            <person name="Heazlewood J.L."/>
            <person name="Clifton R."/>
            <person name="Parker K.L."/>
            <person name="Millar A.H."/>
            <person name="Whelan J."/>
        </authorList>
    </citation>
    <scope>TISSUE SPECIFICITY</scope>
    <scope>INDUCTION</scope>
</reference>
<reference key="8">
    <citation type="journal article" date="2007" name="Plant Cell">
        <title>Functional definition of outer membrane proteins involved in preprotein import into mitochondria.</title>
        <authorList>
            <person name="Lister R."/>
            <person name="Carrie C."/>
            <person name="Duncan O."/>
            <person name="Ho L.H."/>
            <person name="Howell K.A."/>
            <person name="Murcha M.W."/>
            <person name="Whelan J."/>
        </authorList>
    </citation>
    <scope>FUNCTION</scope>
    <scope>DISRUPTION PHENOTYPE</scope>
    <scope>SUBUNIT</scope>
    <scope>SUBCELLULAR LOCATION</scope>
    <scope>INTERACTION WITH MITOCHONDRIAL PRECURSOR PROTEINS</scope>
</reference>
<reference key="9">
    <citation type="journal article" date="2009" name="Plant Physiol.">
        <title>Large-scale Arabidopsis phosphoproteome profiling reveals novel chloroplast kinase substrates and phosphorylation networks.</title>
        <authorList>
            <person name="Reiland S."/>
            <person name="Messerli G."/>
            <person name="Baerenfaller K."/>
            <person name="Gerrits B."/>
            <person name="Endler A."/>
            <person name="Grossmann J."/>
            <person name="Gruissem W."/>
            <person name="Baginsky S."/>
        </authorList>
    </citation>
    <scope>IDENTIFICATION BY MASS SPECTROMETRY [LARGE SCALE ANALYSIS]</scope>
</reference>
<reference key="10">
    <citation type="journal article" date="2010" name="Plant Cell">
        <title>ANKYRIN REPEAT-CONTAINING PROTEIN 2A is an essential molecular chaperone for peroxisomal membrane-bound ASCORBATE PEROXIDASE3 in Arabidopsis.</title>
        <authorList>
            <person name="Shen G."/>
            <person name="Kuppu S."/>
            <person name="Venkataramani S."/>
            <person name="Wang J."/>
            <person name="Yan J."/>
            <person name="Qiu X."/>
            <person name="Zhang H."/>
        </authorList>
    </citation>
    <scope>INTERACTION WITH AKR2A</scope>
    <source>
        <strain>cv. C24</strain>
        <strain>cv. Columbia</strain>
    </source>
</reference>
<reference key="11">
    <citation type="journal article" date="2010" name="Plant Signal. Behav.">
        <title>Is AKR2A an essential molecular chaperone for a class of membrane-bound proteins in plants?</title>
        <authorList>
            <person name="Zhang H."/>
            <person name="Li X."/>
            <person name="Zhang Y."/>
            <person name="Kuppu S."/>
            <person name="Shen G."/>
        </authorList>
    </citation>
    <scope>AKR2A-BINDING SEQUENCE</scope>
    <scope>REVIEW</scope>
</reference>
<evidence type="ECO:0000250" key="1">
    <source>
        <dbReference type="UniProtKB" id="P82873"/>
    </source>
</evidence>
<evidence type="ECO:0000250" key="2">
    <source>
        <dbReference type="UniProtKB" id="P82874"/>
    </source>
</evidence>
<evidence type="ECO:0000255" key="3"/>
<evidence type="ECO:0000269" key="4">
    <source>
    </source>
</evidence>
<evidence type="ECO:0000269" key="5">
    <source>
    </source>
</evidence>
<evidence type="ECO:0000269" key="6">
    <source>
    </source>
</evidence>
<evidence type="ECO:0000269" key="7">
    <source>
    </source>
</evidence>
<evidence type="ECO:0000269" key="8">
    <source ref="6"/>
</evidence>
<evidence type="ECO:0000303" key="9">
    <source>
    </source>
</evidence>
<evidence type="ECO:0000305" key="10"/>
<evidence type="ECO:0000312" key="11">
    <source>
        <dbReference type="Araport" id="AT5G40930"/>
    </source>
</evidence>
<evidence type="ECO:0000312" key="12">
    <source>
        <dbReference type="EMBL" id="BAB10523.1"/>
    </source>
</evidence>
<organism>
    <name type="scientific">Arabidopsis thaliana</name>
    <name type="common">Mouse-ear cress</name>
    <dbReference type="NCBI Taxonomy" id="3702"/>
    <lineage>
        <taxon>Eukaryota</taxon>
        <taxon>Viridiplantae</taxon>
        <taxon>Streptophyta</taxon>
        <taxon>Embryophyta</taxon>
        <taxon>Tracheophyta</taxon>
        <taxon>Spermatophyta</taxon>
        <taxon>Magnoliopsida</taxon>
        <taxon>eudicotyledons</taxon>
        <taxon>Gunneridae</taxon>
        <taxon>Pentapetalae</taxon>
        <taxon>rosids</taxon>
        <taxon>malvids</taxon>
        <taxon>Brassicales</taxon>
        <taxon>Brassicaceae</taxon>
        <taxon>Camelineae</taxon>
        <taxon>Arabidopsis</taxon>
    </lineage>
</organism>
<gene>
    <name evidence="9" type="primary">TOM20-4</name>
    <name evidence="11" type="ordered locus">At5g40930</name>
    <name evidence="12" type="ORF">MMG1.2</name>
</gene>
<protein>
    <recommendedName>
        <fullName evidence="9">Mitochondrial import receptor subunit TOM20-4</fullName>
    </recommendedName>
    <alternativeName>
        <fullName evidence="9">Translocase of outer membrane 20 kDa subunit 4</fullName>
    </alternativeName>
</protein>
<dbReference type="EMBL" id="AB023040">
    <property type="protein sequence ID" value="BAB10523.1"/>
    <property type="molecule type" value="Genomic_DNA"/>
</dbReference>
<dbReference type="EMBL" id="CP002688">
    <property type="protein sequence ID" value="AED94616.1"/>
    <property type="molecule type" value="Genomic_DNA"/>
</dbReference>
<dbReference type="EMBL" id="AF462861">
    <property type="protein sequence ID" value="AAL58947.1"/>
    <property type="molecule type" value="mRNA"/>
</dbReference>
<dbReference type="EMBL" id="AY141998">
    <property type="protein sequence ID" value="AAM98262.1"/>
    <property type="molecule type" value="mRNA"/>
</dbReference>
<dbReference type="EMBL" id="AK117822">
    <property type="protein sequence ID" value="BAC42464.1"/>
    <property type="molecule type" value="mRNA"/>
</dbReference>
<dbReference type="RefSeq" id="NP_198909.1">
    <property type="nucleotide sequence ID" value="NM_123458.5"/>
</dbReference>
<dbReference type="SMR" id="P82805"/>
<dbReference type="BioGRID" id="19345">
    <property type="interactions" value="9"/>
</dbReference>
<dbReference type="FunCoup" id="P82805">
    <property type="interactions" value="44"/>
</dbReference>
<dbReference type="IntAct" id="P82805">
    <property type="interactions" value="8"/>
</dbReference>
<dbReference type="MINT" id="P82805"/>
<dbReference type="STRING" id="3702.P82805"/>
<dbReference type="iPTMnet" id="P82805"/>
<dbReference type="PaxDb" id="3702-AT5G40930.1"/>
<dbReference type="ProteomicsDB" id="232431"/>
<dbReference type="EnsemblPlants" id="AT5G40930.1">
    <property type="protein sequence ID" value="AT5G40930.1"/>
    <property type="gene ID" value="AT5G40930"/>
</dbReference>
<dbReference type="GeneID" id="834094"/>
<dbReference type="Gramene" id="AT5G40930.1">
    <property type="protein sequence ID" value="AT5G40930.1"/>
    <property type="gene ID" value="AT5G40930"/>
</dbReference>
<dbReference type="KEGG" id="ath:AT5G40930"/>
<dbReference type="Araport" id="AT5G40930"/>
<dbReference type="TAIR" id="AT5G40930">
    <property type="gene designation" value="TOM20-4"/>
</dbReference>
<dbReference type="eggNOG" id="ENOG502QT42">
    <property type="taxonomic scope" value="Eukaryota"/>
</dbReference>
<dbReference type="HOGENOM" id="CLU_117357_0_0_1"/>
<dbReference type="InParanoid" id="P82805"/>
<dbReference type="OMA" id="WVILASY"/>
<dbReference type="PhylomeDB" id="P82805"/>
<dbReference type="PRO" id="PR:P82805"/>
<dbReference type="Proteomes" id="UP000006548">
    <property type="component" value="Chromosome 5"/>
</dbReference>
<dbReference type="ExpressionAtlas" id="P82805">
    <property type="expression patterns" value="baseline and differential"/>
</dbReference>
<dbReference type="GO" id="GO:0005742">
    <property type="term" value="C:mitochondrial outer membrane translocase complex"/>
    <property type="evidence" value="ECO:0000314"/>
    <property type="project" value="TAIR"/>
</dbReference>
<dbReference type="GO" id="GO:0000325">
    <property type="term" value="C:plant-type vacuole"/>
    <property type="evidence" value="ECO:0007005"/>
    <property type="project" value="TAIR"/>
</dbReference>
<dbReference type="GO" id="GO:0009536">
    <property type="term" value="C:plastid"/>
    <property type="evidence" value="ECO:0007005"/>
    <property type="project" value="TAIR"/>
</dbReference>
<dbReference type="GO" id="GO:0005744">
    <property type="term" value="C:TIM23 mitochondrial import inner membrane translocase complex"/>
    <property type="evidence" value="ECO:0000304"/>
    <property type="project" value="TAIR"/>
</dbReference>
<dbReference type="GO" id="GO:0015450">
    <property type="term" value="F:protein-transporting ATPase activity"/>
    <property type="evidence" value="ECO:0000304"/>
    <property type="project" value="TAIR"/>
</dbReference>
<dbReference type="GO" id="GO:0045040">
    <property type="term" value="P:protein insertion into mitochondrial outer membrane"/>
    <property type="evidence" value="ECO:0007669"/>
    <property type="project" value="InterPro"/>
</dbReference>
<dbReference type="GO" id="GO:0006626">
    <property type="term" value="P:protein targeting to mitochondrion"/>
    <property type="evidence" value="ECO:0000315"/>
    <property type="project" value="TAIR"/>
</dbReference>
<dbReference type="Gene3D" id="1.25.40.10">
    <property type="entry name" value="Tetratricopeptide repeat domain"/>
    <property type="match status" value="1"/>
</dbReference>
<dbReference type="InterPro" id="IPR010547">
    <property type="entry name" value="TOM20_imprt_rcpt"/>
</dbReference>
<dbReference type="InterPro" id="IPR011990">
    <property type="entry name" value="TPR-like_helical_dom_sf"/>
</dbReference>
<dbReference type="PANTHER" id="PTHR32409">
    <property type="entry name" value="MITOCHONDRIAL IMPORT RECEPTOR SUBUNIT TOM20-1-RELATED"/>
    <property type="match status" value="1"/>
</dbReference>
<dbReference type="PANTHER" id="PTHR32409:SF3">
    <property type="entry name" value="MITOCHONDRIAL IMPORT RECEPTOR SUBUNIT TOM20-1-RELATED"/>
    <property type="match status" value="1"/>
</dbReference>
<dbReference type="Pfam" id="PF06552">
    <property type="entry name" value="TOM20_plant"/>
    <property type="match status" value="1"/>
</dbReference>
<dbReference type="SUPFAM" id="SSF48452">
    <property type="entry name" value="TPR-like"/>
    <property type="match status" value="1"/>
</dbReference>
<accession>P82805</accession>
<accession>Q541X7</accession>
<feature type="chain" id="PRO_0000051546" description="Mitochondrial import receptor subunit TOM20-4">
    <location>
        <begin position="1"/>
        <end position="187"/>
    </location>
</feature>
<feature type="topological domain" description="Cytoplasmic" evidence="3">
    <location>
        <begin position="1"/>
        <end position="160"/>
    </location>
</feature>
<feature type="transmembrane region" description="Helical" evidence="3">
    <location>
        <begin position="161"/>
        <end position="178"/>
    </location>
</feature>
<feature type="topological domain" description="Mitochondrial intermembrane" evidence="3">
    <location>
        <begin position="179"/>
        <end position="187"/>
    </location>
</feature>
<feature type="repeat" description="TPR">
    <location>
        <begin position="84"/>
        <end position="117"/>
    </location>
</feature>
<feature type="short sequence motif" description="AKR2A-binding sequence (ABS) required for mitochondrion outer membrane targeting" evidence="7">
    <location>
        <begin position="179"/>
        <end position="187"/>
    </location>
</feature>
<feature type="modified residue" description="N-acetylmethionine" evidence="2">
    <location>
        <position position="1"/>
    </location>
</feature>
<proteinExistence type="evidence at protein level"/>
<sequence length="187" mass="20973">MDMQNENERLMVFEHARKVAEATYVKNPLDAENLTRWAGALLELSQFQTEPKQMILEAILKLGEALVIDPKKHDALWLIGNAHLSFGFLSSDQTEASDNFEKASQFFQLAVEEQPESELYRKSLTLASKAPELHTGGTAGPSSNSAKTMKQKKTSEFKYDVFGWVILASYVVAWISFANSQTPVSRQ</sequence>
<keyword id="KW-0007">Acetylation</keyword>
<keyword id="KW-0903">Direct protein sequencing</keyword>
<keyword id="KW-0472">Membrane</keyword>
<keyword id="KW-0496">Mitochondrion</keyword>
<keyword id="KW-1000">Mitochondrion outer membrane</keyword>
<keyword id="KW-0653">Protein transport</keyword>
<keyword id="KW-1185">Reference proteome</keyword>
<keyword id="KW-0802">TPR repeat</keyword>
<keyword id="KW-0812">Transmembrane</keyword>
<keyword id="KW-1133">Transmembrane helix</keyword>
<keyword id="KW-0813">Transport</keyword>
<name>TO204_ARATH</name>